<sequence length="85" mass="10090">MVKLRLKRCGRKQQAIYRIVAIDVRSRREGRDLRKVGFYDPIKNQTCLNVPAILYFLEKGAQPTRTVYDILRKAEFFKDKERTLS</sequence>
<gene>
    <name evidence="1" type="primary">rps16</name>
</gene>
<dbReference type="EMBL" id="X60823">
    <property type="protein sequence ID" value="CAA43215.1"/>
    <property type="molecule type" value="Genomic_DNA"/>
</dbReference>
<dbReference type="EMBL" id="X86563">
    <property type="protein sequence ID" value="CAA60267.1"/>
    <property type="molecule type" value="Genomic_DNA"/>
</dbReference>
<dbReference type="PIR" id="S19119">
    <property type="entry name" value="R3ZM16"/>
</dbReference>
<dbReference type="RefSeq" id="NP_043006.1">
    <property type="nucleotide sequence ID" value="NC_001666.2"/>
</dbReference>
<dbReference type="SMR" id="P27723"/>
<dbReference type="FunCoup" id="P27723">
    <property type="interactions" value="51"/>
</dbReference>
<dbReference type="STRING" id="4577.P27723"/>
<dbReference type="PaxDb" id="4577-GRMZM5G811749_P01"/>
<dbReference type="GeneID" id="845232"/>
<dbReference type="KEGG" id="zma:845232"/>
<dbReference type="MaizeGDB" id="67053"/>
<dbReference type="eggNOG" id="KOG3419">
    <property type="taxonomic scope" value="Eukaryota"/>
</dbReference>
<dbReference type="HOGENOM" id="CLU_100590_5_2_1"/>
<dbReference type="InParanoid" id="P27723"/>
<dbReference type="OMA" id="KQPIYRI"/>
<dbReference type="OrthoDB" id="407221at2759"/>
<dbReference type="Proteomes" id="UP000007305">
    <property type="component" value="Chloroplast"/>
</dbReference>
<dbReference type="GO" id="GO:0009507">
    <property type="term" value="C:chloroplast"/>
    <property type="evidence" value="ECO:0007669"/>
    <property type="project" value="UniProtKB-SubCell"/>
</dbReference>
<dbReference type="GO" id="GO:0015935">
    <property type="term" value="C:small ribosomal subunit"/>
    <property type="evidence" value="ECO:0000318"/>
    <property type="project" value="GO_Central"/>
</dbReference>
<dbReference type="GO" id="GO:0003735">
    <property type="term" value="F:structural constituent of ribosome"/>
    <property type="evidence" value="ECO:0000318"/>
    <property type="project" value="GO_Central"/>
</dbReference>
<dbReference type="GO" id="GO:0006412">
    <property type="term" value="P:translation"/>
    <property type="evidence" value="ECO:0007669"/>
    <property type="project" value="UniProtKB-UniRule"/>
</dbReference>
<dbReference type="FunFam" id="3.30.1320.10:FF:000003">
    <property type="entry name" value="30S ribosomal protein S16, chloroplastic"/>
    <property type="match status" value="1"/>
</dbReference>
<dbReference type="Gene3D" id="3.30.1320.10">
    <property type="match status" value="1"/>
</dbReference>
<dbReference type="HAMAP" id="MF_00385">
    <property type="entry name" value="Ribosomal_bS16"/>
    <property type="match status" value="1"/>
</dbReference>
<dbReference type="InterPro" id="IPR000307">
    <property type="entry name" value="Ribosomal_bS16"/>
</dbReference>
<dbReference type="InterPro" id="IPR020592">
    <property type="entry name" value="Ribosomal_bS16_CS"/>
</dbReference>
<dbReference type="InterPro" id="IPR023803">
    <property type="entry name" value="Ribosomal_bS16_dom_sf"/>
</dbReference>
<dbReference type="NCBIfam" id="TIGR00002">
    <property type="entry name" value="S16"/>
    <property type="match status" value="1"/>
</dbReference>
<dbReference type="PANTHER" id="PTHR12919">
    <property type="entry name" value="30S RIBOSOMAL PROTEIN S16"/>
    <property type="match status" value="1"/>
</dbReference>
<dbReference type="PANTHER" id="PTHR12919:SF20">
    <property type="entry name" value="SMALL RIBOSOMAL SUBUNIT PROTEIN BS16M"/>
    <property type="match status" value="1"/>
</dbReference>
<dbReference type="Pfam" id="PF00886">
    <property type="entry name" value="Ribosomal_S16"/>
    <property type="match status" value="1"/>
</dbReference>
<dbReference type="SUPFAM" id="SSF54565">
    <property type="entry name" value="Ribosomal protein S16"/>
    <property type="match status" value="1"/>
</dbReference>
<dbReference type="PROSITE" id="PS00732">
    <property type="entry name" value="RIBOSOMAL_S16"/>
    <property type="match status" value="1"/>
</dbReference>
<evidence type="ECO:0000255" key="1">
    <source>
        <dbReference type="HAMAP-Rule" id="MF_00385"/>
    </source>
</evidence>
<evidence type="ECO:0000305" key="2"/>
<keyword id="KW-0150">Chloroplast</keyword>
<keyword id="KW-0934">Plastid</keyword>
<keyword id="KW-1185">Reference proteome</keyword>
<keyword id="KW-0687">Ribonucleoprotein</keyword>
<keyword id="KW-0689">Ribosomal protein</keyword>
<feature type="chain" id="PRO_0000167306" description="Small ribosomal subunit protein bS16c">
    <location>
        <begin position="1"/>
        <end position="85"/>
    </location>
</feature>
<name>RR16_MAIZE</name>
<protein>
    <recommendedName>
        <fullName evidence="1">Small ribosomal subunit protein bS16c</fullName>
    </recommendedName>
    <alternativeName>
        <fullName evidence="2">30S ribosomal protein S16, chloroplastic</fullName>
    </alternativeName>
</protein>
<organism>
    <name type="scientific">Zea mays</name>
    <name type="common">Maize</name>
    <dbReference type="NCBI Taxonomy" id="4577"/>
    <lineage>
        <taxon>Eukaryota</taxon>
        <taxon>Viridiplantae</taxon>
        <taxon>Streptophyta</taxon>
        <taxon>Embryophyta</taxon>
        <taxon>Tracheophyta</taxon>
        <taxon>Spermatophyta</taxon>
        <taxon>Magnoliopsida</taxon>
        <taxon>Liliopsida</taxon>
        <taxon>Poales</taxon>
        <taxon>Poaceae</taxon>
        <taxon>PACMAD clade</taxon>
        <taxon>Panicoideae</taxon>
        <taxon>Andropogonodae</taxon>
        <taxon>Andropogoneae</taxon>
        <taxon>Tripsacinae</taxon>
        <taxon>Zea</taxon>
    </lineage>
</organism>
<reference key="1">
    <citation type="journal article" date="1992" name="Plant Mol. Biol.">
        <title>Nucleotide sequence, map position and transcript pattern of the intron-containing gene for maize chloroplast ribosomal protein S16.</title>
        <authorList>
            <person name="Kanakari S."/>
            <person name="Timmler G."/>
            <person name="von Knoblauch K."/>
            <person name="Subramanian A.R."/>
        </authorList>
    </citation>
    <scope>NUCLEOTIDE SEQUENCE [GENOMIC DNA]</scope>
    <source>
        <strain>cv. FR9CMSSR37</strain>
        <tissue>Leaf</tissue>
    </source>
</reference>
<reference key="2">
    <citation type="journal article" date="1995" name="J. Mol. Biol.">
        <title>Complete sequence of the maize chloroplast genome: gene content, hotspots of divergence and fine tuning of genetic information by transcript editing.</title>
        <authorList>
            <person name="Maier R.M."/>
            <person name="Neckermann K."/>
            <person name="Igloi G.L."/>
            <person name="Koessel H."/>
        </authorList>
    </citation>
    <scope>NUCLEOTIDE SEQUENCE [LARGE SCALE GENOMIC DNA]</scope>
    <source>
        <strain>cv. B73</strain>
    </source>
</reference>
<geneLocation type="chloroplast"/>
<accession>P27723</accession>
<comment type="subcellular location">
    <subcellularLocation>
        <location>Plastid</location>
        <location>Chloroplast</location>
    </subcellularLocation>
</comment>
<comment type="similarity">
    <text evidence="1">Belongs to the bacterial ribosomal protein bS16 family.</text>
</comment>
<proteinExistence type="inferred from homology"/>